<gene>
    <name evidence="1" type="primary">purT</name>
    <name type="ordered locus">NATL1_12301</name>
</gene>
<name>PURT_PROM1</name>
<organism>
    <name type="scientific">Prochlorococcus marinus (strain NATL1A)</name>
    <dbReference type="NCBI Taxonomy" id="167555"/>
    <lineage>
        <taxon>Bacteria</taxon>
        <taxon>Bacillati</taxon>
        <taxon>Cyanobacteriota</taxon>
        <taxon>Cyanophyceae</taxon>
        <taxon>Synechococcales</taxon>
        <taxon>Prochlorococcaceae</taxon>
        <taxon>Prochlorococcus</taxon>
    </lineage>
</organism>
<keyword id="KW-0067">ATP-binding</keyword>
<keyword id="KW-0436">Ligase</keyword>
<keyword id="KW-0460">Magnesium</keyword>
<keyword id="KW-0479">Metal-binding</keyword>
<keyword id="KW-0547">Nucleotide-binding</keyword>
<keyword id="KW-0658">Purine biosynthesis</keyword>
<comment type="function">
    <text evidence="1">Involved in the de novo purine biosynthesis. Catalyzes the transfer of formate to 5-phospho-ribosyl-glycinamide (GAR), producing 5-phospho-ribosyl-N-formylglycinamide (FGAR). Formate is provided by PurU via hydrolysis of 10-formyl-tetrahydrofolate.</text>
</comment>
<comment type="catalytic activity">
    <reaction evidence="1">
        <text>N(1)-(5-phospho-beta-D-ribosyl)glycinamide + formate + ATP = N(2)-formyl-N(1)-(5-phospho-beta-D-ribosyl)glycinamide + ADP + phosphate + H(+)</text>
        <dbReference type="Rhea" id="RHEA:24829"/>
        <dbReference type="ChEBI" id="CHEBI:15378"/>
        <dbReference type="ChEBI" id="CHEBI:15740"/>
        <dbReference type="ChEBI" id="CHEBI:30616"/>
        <dbReference type="ChEBI" id="CHEBI:43474"/>
        <dbReference type="ChEBI" id="CHEBI:143788"/>
        <dbReference type="ChEBI" id="CHEBI:147286"/>
        <dbReference type="ChEBI" id="CHEBI:456216"/>
        <dbReference type="EC" id="6.3.1.21"/>
    </reaction>
    <physiologicalReaction direction="left-to-right" evidence="1">
        <dbReference type="Rhea" id="RHEA:24830"/>
    </physiologicalReaction>
</comment>
<comment type="pathway">
    <text evidence="1">Purine metabolism; IMP biosynthesis via de novo pathway; N(2)-formyl-N(1)-(5-phospho-D-ribosyl)glycinamide from N(1)-(5-phospho-D-ribosyl)glycinamide (formate route): step 1/1.</text>
</comment>
<comment type="subunit">
    <text evidence="1">Homodimer.</text>
</comment>
<comment type="similarity">
    <text evidence="1">Belongs to the PurK/PurT family.</text>
</comment>
<evidence type="ECO:0000255" key="1">
    <source>
        <dbReference type="HAMAP-Rule" id="MF_01643"/>
    </source>
</evidence>
<sequence>MNVFPKKIMLLGSGELGKEVAIAAKRLGCYVIACDRYNDAPAMQIADQFNVFNMNNGSELKEVIYKCNPDIIIPEIEALAVDVLKEIEQKITVIPNSRATATTMNRDKIRDLASNELNIRTAKFSYAVNQSELDLHAETIGYPLLIKPVMSSSGKGQSLVKNKNELAQAWNLAIEKSRGKSNKIILEEFIDFDLEITLLTIRQSNGKTLFCAPIGHEQKNGDYQCSWQPAELTESVLEKAQQIAKRVTDNLGGVGLFGVEFFIKGEEVIFSELSPRPHDTGLVTLISQNLNEFELHLRAVLGIPIPEIVCHEASASRVILASMETTDVAFTGLEQALSQSNTNVFMFGKPSSTEGRRMGVAVAKAETIDEARIKADNAAQSIQFINE</sequence>
<feature type="chain" id="PRO_0000319205" description="Formate-dependent phosphoribosylglycinamide formyltransferase">
    <location>
        <begin position="1"/>
        <end position="387"/>
    </location>
</feature>
<feature type="domain" description="ATP-grasp" evidence="1">
    <location>
        <begin position="111"/>
        <end position="301"/>
    </location>
</feature>
<feature type="binding site" evidence="1">
    <location>
        <begin position="15"/>
        <end position="16"/>
    </location>
    <ligand>
        <name>N(1)-(5-phospho-beta-D-ribosyl)glycinamide</name>
        <dbReference type="ChEBI" id="CHEBI:143788"/>
    </ligand>
</feature>
<feature type="binding site" evidence="1">
    <location>
        <position position="75"/>
    </location>
    <ligand>
        <name>N(1)-(5-phospho-beta-D-ribosyl)glycinamide</name>
        <dbReference type="ChEBI" id="CHEBI:143788"/>
    </ligand>
</feature>
<feature type="binding site" evidence="1">
    <location>
        <position position="106"/>
    </location>
    <ligand>
        <name>ATP</name>
        <dbReference type="ChEBI" id="CHEBI:30616"/>
    </ligand>
</feature>
<feature type="binding site" evidence="1">
    <location>
        <position position="147"/>
    </location>
    <ligand>
        <name>ATP</name>
        <dbReference type="ChEBI" id="CHEBI:30616"/>
    </ligand>
</feature>
<feature type="binding site" evidence="1">
    <location>
        <begin position="152"/>
        <end position="157"/>
    </location>
    <ligand>
        <name>ATP</name>
        <dbReference type="ChEBI" id="CHEBI:30616"/>
    </ligand>
</feature>
<feature type="binding site" evidence="1">
    <location>
        <begin position="187"/>
        <end position="190"/>
    </location>
    <ligand>
        <name>ATP</name>
        <dbReference type="ChEBI" id="CHEBI:30616"/>
    </ligand>
</feature>
<feature type="binding site" evidence="1">
    <location>
        <position position="195"/>
    </location>
    <ligand>
        <name>ATP</name>
        <dbReference type="ChEBI" id="CHEBI:30616"/>
    </ligand>
</feature>
<feature type="binding site" evidence="1">
    <location>
        <position position="260"/>
    </location>
    <ligand>
        <name>Mg(2+)</name>
        <dbReference type="ChEBI" id="CHEBI:18420"/>
    </ligand>
</feature>
<feature type="binding site" evidence="1">
    <location>
        <position position="272"/>
    </location>
    <ligand>
        <name>Mg(2+)</name>
        <dbReference type="ChEBI" id="CHEBI:18420"/>
    </ligand>
</feature>
<feature type="binding site" evidence="1">
    <location>
        <position position="279"/>
    </location>
    <ligand>
        <name>N(1)-(5-phospho-beta-D-ribosyl)glycinamide</name>
        <dbReference type="ChEBI" id="CHEBI:143788"/>
    </ligand>
</feature>
<feature type="binding site" evidence="1">
    <location>
        <position position="349"/>
    </location>
    <ligand>
        <name>N(1)-(5-phospho-beta-D-ribosyl)glycinamide</name>
        <dbReference type="ChEBI" id="CHEBI:143788"/>
    </ligand>
</feature>
<feature type="binding site" evidence="1">
    <location>
        <begin position="356"/>
        <end position="357"/>
    </location>
    <ligand>
        <name>N(1)-(5-phospho-beta-D-ribosyl)glycinamide</name>
        <dbReference type="ChEBI" id="CHEBI:143788"/>
    </ligand>
</feature>
<accession>A2C2S8</accession>
<dbReference type="EC" id="6.3.1.21" evidence="1"/>
<dbReference type="EMBL" id="CP000553">
    <property type="protein sequence ID" value="ABM75788.1"/>
    <property type="molecule type" value="Genomic_DNA"/>
</dbReference>
<dbReference type="RefSeq" id="WP_011823865.1">
    <property type="nucleotide sequence ID" value="NC_008819.1"/>
</dbReference>
<dbReference type="SMR" id="A2C2S8"/>
<dbReference type="KEGG" id="pme:NATL1_12301"/>
<dbReference type="eggNOG" id="COG0027">
    <property type="taxonomic scope" value="Bacteria"/>
</dbReference>
<dbReference type="HOGENOM" id="CLU_011534_1_3_3"/>
<dbReference type="UniPathway" id="UPA00074">
    <property type="reaction ID" value="UER00127"/>
</dbReference>
<dbReference type="Proteomes" id="UP000002592">
    <property type="component" value="Chromosome"/>
</dbReference>
<dbReference type="GO" id="GO:0005829">
    <property type="term" value="C:cytosol"/>
    <property type="evidence" value="ECO:0007669"/>
    <property type="project" value="TreeGrafter"/>
</dbReference>
<dbReference type="GO" id="GO:0005524">
    <property type="term" value="F:ATP binding"/>
    <property type="evidence" value="ECO:0007669"/>
    <property type="project" value="UniProtKB-UniRule"/>
</dbReference>
<dbReference type="GO" id="GO:0000287">
    <property type="term" value="F:magnesium ion binding"/>
    <property type="evidence" value="ECO:0007669"/>
    <property type="project" value="InterPro"/>
</dbReference>
<dbReference type="GO" id="GO:0043815">
    <property type="term" value="F:phosphoribosylglycinamide formyltransferase 2 activity"/>
    <property type="evidence" value="ECO:0007669"/>
    <property type="project" value="UniProtKB-UniRule"/>
</dbReference>
<dbReference type="GO" id="GO:0004644">
    <property type="term" value="F:phosphoribosylglycinamide formyltransferase activity"/>
    <property type="evidence" value="ECO:0007669"/>
    <property type="project" value="InterPro"/>
</dbReference>
<dbReference type="GO" id="GO:0006189">
    <property type="term" value="P:'de novo' IMP biosynthetic process"/>
    <property type="evidence" value="ECO:0007669"/>
    <property type="project" value="UniProtKB-UniRule"/>
</dbReference>
<dbReference type="Gene3D" id="3.40.50.20">
    <property type="match status" value="1"/>
</dbReference>
<dbReference type="Gene3D" id="3.30.1490.20">
    <property type="entry name" value="ATP-grasp fold, A domain"/>
    <property type="match status" value="1"/>
</dbReference>
<dbReference type="Gene3D" id="3.30.470.20">
    <property type="entry name" value="ATP-grasp fold, B domain"/>
    <property type="match status" value="1"/>
</dbReference>
<dbReference type="HAMAP" id="MF_01643">
    <property type="entry name" value="PurT"/>
    <property type="match status" value="1"/>
</dbReference>
<dbReference type="InterPro" id="IPR011761">
    <property type="entry name" value="ATP-grasp"/>
</dbReference>
<dbReference type="InterPro" id="IPR003135">
    <property type="entry name" value="ATP-grasp_carboxylate-amine"/>
</dbReference>
<dbReference type="InterPro" id="IPR013815">
    <property type="entry name" value="ATP_grasp_subdomain_1"/>
</dbReference>
<dbReference type="InterPro" id="IPR016185">
    <property type="entry name" value="PreATP-grasp_dom_sf"/>
</dbReference>
<dbReference type="InterPro" id="IPR005862">
    <property type="entry name" value="PurT"/>
</dbReference>
<dbReference type="InterPro" id="IPR054350">
    <property type="entry name" value="PurT/PurK_preATP-grasp"/>
</dbReference>
<dbReference type="InterPro" id="IPR048740">
    <property type="entry name" value="PurT_C"/>
</dbReference>
<dbReference type="InterPro" id="IPR011054">
    <property type="entry name" value="Rudment_hybrid_motif"/>
</dbReference>
<dbReference type="NCBIfam" id="NF006766">
    <property type="entry name" value="PRK09288.1"/>
    <property type="match status" value="1"/>
</dbReference>
<dbReference type="NCBIfam" id="TIGR01142">
    <property type="entry name" value="purT"/>
    <property type="match status" value="1"/>
</dbReference>
<dbReference type="PANTHER" id="PTHR43055">
    <property type="entry name" value="FORMATE-DEPENDENT PHOSPHORIBOSYLGLYCINAMIDE FORMYLTRANSFERASE"/>
    <property type="match status" value="1"/>
</dbReference>
<dbReference type="PANTHER" id="PTHR43055:SF1">
    <property type="entry name" value="FORMATE-DEPENDENT PHOSPHORIBOSYLGLYCINAMIDE FORMYLTRANSFERASE"/>
    <property type="match status" value="1"/>
</dbReference>
<dbReference type="Pfam" id="PF02222">
    <property type="entry name" value="ATP-grasp"/>
    <property type="match status" value="1"/>
</dbReference>
<dbReference type="Pfam" id="PF21244">
    <property type="entry name" value="PurT_C"/>
    <property type="match status" value="1"/>
</dbReference>
<dbReference type="Pfam" id="PF22660">
    <property type="entry name" value="RS_preATP-grasp-like"/>
    <property type="match status" value="1"/>
</dbReference>
<dbReference type="SUPFAM" id="SSF56059">
    <property type="entry name" value="Glutathione synthetase ATP-binding domain-like"/>
    <property type="match status" value="1"/>
</dbReference>
<dbReference type="SUPFAM" id="SSF52440">
    <property type="entry name" value="PreATP-grasp domain"/>
    <property type="match status" value="1"/>
</dbReference>
<dbReference type="SUPFAM" id="SSF51246">
    <property type="entry name" value="Rudiment single hybrid motif"/>
    <property type="match status" value="1"/>
</dbReference>
<dbReference type="PROSITE" id="PS50975">
    <property type="entry name" value="ATP_GRASP"/>
    <property type="match status" value="1"/>
</dbReference>
<reference key="1">
    <citation type="journal article" date="2007" name="PLoS Genet.">
        <title>Patterns and implications of gene gain and loss in the evolution of Prochlorococcus.</title>
        <authorList>
            <person name="Kettler G.C."/>
            <person name="Martiny A.C."/>
            <person name="Huang K."/>
            <person name="Zucker J."/>
            <person name="Coleman M.L."/>
            <person name="Rodrigue S."/>
            <person name="Chen F."/>
            <person name="Lapidus A."/>
            <person name="Ferriera S."/>
            <person name="Johnson J."/>
            <person name="Steglich C."/>
            <person name="Church G.M."/>
            <person name="Richardson P."/>
            <person name="Chisholm S.W."/>
        </authorList>
    </citation>
    <scope>NUCLEOTIDE SEQUENCE [LARGE SCALE GENOMIC DNA]</scope>
    <source>
        <strain>NATL1A</strain>
    </source>
</reference>
<protein>
    <recommendedName>
        <fullName evidence="1">Formate-dependent phosphoribosylglycinamide formyltransferase</fullName>
        <ecNumber evidence="1">6.3.1.21</ecNumber>
    </recommendedName>
    <alternativeName>
        <fullName evidence="1">5'-phosphoribosylglycinamide transformylase 2</fullName>
    </alternativeName>
    <alternativeName>
        <fullName evidence="1">Formate-dependent GAR transformylase</fullName>
    </alternativeName>
    <alternativeName>
        <fullName evidence="1">GAR transformylase 2</fullName>
        <shortName evidence="1">GART 2</shortName>
    </alternativeName>
    <alternativeName>
        <fullName evidence="1">Non-folate glycinamide ribonucleotide transformylase</fullName>
    </alternativeName>
    <alternativeName>
        <fullName evidence="1">Phosphoribosylglycinamide formyltransferase 2</fullName>
    </alternativeName>
</protein>
<proteinExistence type="inferred from homology"/>